<name>BOL4_BOMPE</name>
<organism>
    <name type="scientific">Bombus pensylvanicus</name>
    <name type="common">American bumblebee</name>
    <name type="synonym">Apis pensylvanica</name>
    <dbReference type="NCBI Taxonomy" id="28643"/>
    <lineage>
        <taxon>Eukaryota</taxon>
        <taxon>Metazoa</taxon>
        <taxon>Ecdysozoa</taxon>
        <taxon>Arthropoda</taxon>
        <taxon>Hexapoda</taxon>
        <taxon>Insecta</taxon>
        <taxon>Pterygota</taxon>
        <taxon>Neoptera</taxon>
        <taxon>Endopterygota</taxon>
        <taxon>Hymenoptera</taxon>
        <taxon>Apocrita</taxon>
        <taxon>Aculeata</taxon>
        <taxon>Apoidea</taxon>
        <taxon>Anthophila</taxon>
        <taxon>Apidae</taxon>
        <taxon>Bombus</taxon>
        <taxon>Fervidobombus</taxon>
    </lineage>
</organism>
<feature type="peptide" id="PRO_0000044041" description="Bombolitin-4" evidence="3">
    <location>
        <begin position="1"/>
        <end position="17"/>
    </location>
</feature>
<feature type="modified residue" description="Valine amide" evidence="3">
    <location>
        <position position="17"/>
    </location>
</feature>
<sequence length="17" mass="1873">INIKDILAKLVKVLGHV</sequence>
<keyword id="KW-0027">Amidation</keyword>
<keyword id="KW-0903">Direct protein sequencing</keyword>
<keyword id="KW-1213">G-protein coupled receptor impairing toxin</keyword>
<keyword id="KW-0467">Mast cell degranulation</keyword>
<keyword id="KW-0964">Secreted</keyword>
<keyword id="KW-0800">Toxin</keyword>
<reference key="1">
    <citation type="journal article" date="1985" name="J. Biol. Chem.">
        <title>Bombolitins, a new class of mast cell degranulating peptides from the venom of the bumblebee Megabombus pennsylvanicus.</title>
        <authorList>
            <person name="Argiolas A."/>
            <person name="Pisano J.J."/>
        </authorList>
    </citation>
    <scope>PROTEIN SEQUENCE</scope>
    <scope>AMIDATION AT VAL-17</scope>
    <scope>SUBCELLULAR LOCATION</scope>
    <source>
        <tissue>Venom</tissue>
    </source>
</reference>
<comment type="function">
    <text evidence="1 2 3">Mast cell degranulating peptide (PubMed:2578459). Its mast cell degranulation activity may be related to the activation of G-protein coupled receptors in mast cells as well as interaction with other proteins located in cell endosomal membranes in the mast cells (By similarity).</text>
</comment>
<comment type="subcellular location">
    <subcellularLocation>
        <location evidence="3">Secreted</location>
    </subcellularLocation>
</comment>
<comment type="tissue specificity">
    <text evidence="6">Expressed by the venom gland.</text>
</comment>
<comment type="similarity">
    <text evidence="5">Belongs to the MCD family. Bombolitin subfamily.</text>
</comment>
<evidence type="ECO:0000250" key="1">
    <source>
        <dbReference type="UniProtKB" id="P01514"/>
    </source>
</evidence>
<evidence type="ECO:0000250" key="2">
    <source>
        <dbReference type="UniProtKB" id="P84914"/>
    </source>
</evidence>
<evidence type="ECO:0000269" key="3">
    <source>
    </source>
</evidence>
<evidence type="ECO:0000303" key="4">
    <source>
    </source>
</evidence>
<evidence type="ECO:0000305" key="5"/>
<evidence type="ECO:0000305" key="6">
    <source>
    </source>
</evidence>
<protein>
    <recommendedName>
        <fullName evidence="5">Bombolitin-4</fullName>
    </recommendedName>
    <alternativeName>
        <fullName evidence="4">Bombolitin IV</fullName>
    </alternativeName>
</protein>
<proteinExistence type="evidence at protein level"/>
<accession>P07495</accession>
<dbReference type="PIR" id="D22595">
    <property type="entry name" value="D22595"/>
</dbReference>
<dbReference type="GO" id="GO:0005576">
    <property type="term" value="C:extracellular region"/>
    <property type="evidence" value="ECO:0007669"/>
    <property type="project" value="UniProtKB-SubCell"/>
</dbReference>
<dbReference type="GO" id="GO:0090729">
    <property type="term" value="F:toxin activity"/>
    <property type="evidence" value="ECO:0007669"/>
    <property type="project" value="UniProtKB-KW"/>
</dbReference>
<dbReference type="InterPro" id="IPR012534">
    <property type="entry name" value="Bombolitin"/>
</dbReference>
<dbReference type="Pfam" id="PF08096">
    <property type="entry name" value="Bombolitin"/>
    <property type="match status" value="1"/>
</dbReference>